<evidence type="ECO:0000255" key="1">
    <source>
        <dbReference type="HAMAP-Rule" id="MF_00480"/>
    </source>
</evidence>
<evidence type="ECO:0000305" key="2"/>
<sequence>MPRKGSVPKRDVLPDPIHNSKLVTKLINKIMLDGKRGTAQRILYSAFDLVEQRSGRDALEVFEEAINNIMPVLEVKARRVGGSNYQVPVEVRPERRTTLGLRWLVNYARLRGEKTMEDRLANEILDAANNTGGAVKKREDTHKMAEANKAFAHYRW</sequence>
<comment type="function">
    <text evidence="1">One of the primary rRNA binding proteins, it binds directly to 16S rRNA where it nucleates assembly of the head domain of the 30S subunit. Is located at the subunit interface close to the decoding center, probably blocks exit of the E-site tRNA.</text>
</comment>
<comment type="subunit">
    <text evidence="1">Part of the 30S ribosomal subunit. Contacts proteins S9 and S11.</text>
</comment>
<comment type="similarity">
    <text evidence="1">Belongs to the universal ribosomal protein uS7 family.</text>
</comment>
<protein>
    <recommendedName>
        <fullName evidence="1">Small ribosomal subunit protein uS7</fullName>
    </recommendedName>
    <alternativeName>
        <fullName evidence="2">30S ribosomal protein S7</fullName>
    </alternativeName>
</protein>
<proteinExistence type="inferred from homology"/>
<organism>
    <name type="scientific">Staphylococcus aureus (strain Newman)</name>
    <dbReference type="NCBI Taxonomy" id="426430"/>
    <lineage>
        <taxon>Bacteria</taxon>
        <taxon>Bacillati</taxon>
        <taxon>Bacillota</taxon>
        <taxon>Bacilli</taxon>
        <taxon>Bacillales</taxon>
        <taxon>Staphylococcaceae</taxon>
        <taxon>Staphylococcus</taxon>
    </lineage>
</organism>
<dbReference type="EMBL" id="AP009351">
    <property type="protein sequence ID" value="BAF66780.1"/>
    <property type="molecule type" value="Genomic_DNA"/>
</dbReference>
<dbReference type="RefSeq" id="WP_001137495.1">
    <property type="nucleotide sequence ID" value="NZ_JBBIAE010000002.1"/>
</dbReference>
<dbReference type="SMR" id="A6QEJ8"/>
<dbReference type="GeneID" id="98344880"/>
<dbReference type="KEGG" id="sae:NWMN_0508"/>
<dbReference type="HOGENOM" id="CLU_072226_1_1_9"/>
<dbReference type="Proteomes" id="UP000006386">
    <property type="component" value="Chromosome"/>
</dbReference>
<dbReference type="GO" id="GO:0015935">
    <property type="term" value="C:small ribosomal subunit"/>
    <property type="evidence" value="ECO:0007669"/>
    <property type="project" value="InterPro"/>
</dbReference>
<dbReference type="GO" id="GO:0019843">
    <property type="term" value="F:rRNA binding"/>
    <property type="evidence" value="ECO:0007669"/>
    <property type="project" value="UniProtKB-UniRule"/>
</dbReference>
<dbReference type="GO" id="GO:0003735">
    <property type="term" value="F:structural constituent of ribosome"/>
    <property type="evidence" value="ECO:0007669"/>
    <property type="project" value="InterPro"/>
</dbReference>
<dbReference type="GO" id="GO:0000049">
    <property type="term" value="F:tRNA binding"/>
    <property type="evidence" value="ECO:0007669"/>
    <property type="project" value="UniProtKB-UniRule"/>
</dbReference>
<dbReference type="GO" id="GO:0006412">
    <property type="term" value="P:translation"/>
    <property type="evidence" value="ECO:0007669"/>
    <property type="project" value="UniProtKB-UniRule"/>
</dbReference>
<dbReference type="CDD" id="cd14869">
    <property type="entry name" value="uS7_Bacteria"/>
    <property type="match status" value="1"/>
</dbReference>
<dbReference type="FunFam" id="1.10.455.10:FF:000001">
    <property type="entry name" value="30S ribosomal protein S7"/>
    <property type="match status" value="1"/>
</dbReference>
<dbReference type="Gene3D" id="1.10.455.10">
    <property type="entry name" value="Ribosomal protein S7 domain"/>
    <property type="match status" value="1"/>
</dbReference>
<dbReference type="HAMAP" id="MF_00480_B">
    <property type="entry name" value="Ribosomal_uS7_B"/>
    <property type="match status" value="1"/>
</dbReference>
<dbReference type="InterPro" id="IPR000235">
    <property type="entry name" value="Ribosomal_uS7"/>
</dbReference>
<dbReference type="InterPro" id="IPR005717">
    <property type="entry name" value="Ribosomal_uS7_bac/org-type"/>
</dbReference>
<dbReference type="InterPro" id="IPR020606">
    <property type="entry name" value="Ribosomal_uS7_CS"/>
</dbReference>
<dbReference type="InterPro" id="IPR023798">
    <property type="entry name" value="Ribosomal_uS7_dom"/>
</dbReference>
<dbReference type="InterPro" id="IPR036823">
    <property type="entry name" value="Ribosomal_uS7_dom_sf"/>
</dbReference>
<dbReference type="NCBIfam" id="TIGR01029">
    <property type="entry name" value="rpsG_bact"/>
    <property type="match status" value="1"/>
</dbReference>
<dbReference type="PANTHER" id="PTHR11205">
    <property type="entry name" value="RIBOSOMAL PROTEIN S7"/>
    <property type="match status" value="1"/>
</dbReference>
<dbReference type="Pfam" id="PF00177">
    <property type="entry name" value="Ribosomal_S7"/>
    <property type="match status" value="1"/>
</dbReference>
<dbReference type="PIRSF" id="PIRSF002122">
    <property type="entry name" value="RPS7p_RPS7a_RPS5e_RPS7o"/>
    <property type="match status" value="1"/>
</dbReference>
<dbReference type="SUPFAM" id="SSF47973">
    <property type="entry name" value="Ribosomal protein S7"/>
    <property type="match status" value="1"/>
</dbReference>
<dbReference type="PROSITE" id="PS00052">
    <property type="entry name" value="RIBOSOMAL_S7"/>
    <property type="match status" value="1"/>
</dbReference>
<feature type="chain" id="PRO_1000072410" description="Small ribosomal subunit protein uS7">
    <location>
        <begin position="1"/>
        <end position="156"/>
    </location>
</feature>
<accession>A6QEJ8</accession>
<gene>
    <name evidence="1" type="primary">rpsG</name>
    <name type="ordered locus">NWMN_0508</name>
</gene>
<reference key="1">
    <citation type="journal article" date="2008" name="J. Bacteriol.">
        <title>Genome sequence of Staphylococcus aureus strain Newman and comparative analysis of staphylococcal genomes: polymorphism and evolution of two major pathogenicity islands.</title>
        <authorList>
            <person name="Baba T."/>
            <person name="Bae T."/>
            <person name="Schneewind O."/>
            <person name="Takeuchi F."/>
            <person name="Hiramatsu K."/>
        </authorList>
    </citation>
    <scope>NUCLEOTIDE SEQUENCE [LARGE SCALE GENOMIC DNA]</scope>
    <source>
        <strain>Newman</strain>
    </source>
</reference>
<name>RS7_STAAE</name>
<keyword id="KW-0687">Ribonucleoprotein</keyword>
<keyword id="KW-0689">Ribosomal protein</keyword>
<keyword id="KW-0694">RNA-binding</keyword>
<keyword id="KW-0699">rRNA-binding</keyword>
<keyword id="KW-0820">tRNA-binding</keyword>